<sequence length="180" mass="20990">MIIYLHGFDSTSPGNHEKVLQLQFIDPDVRFISYSTLHPRHDMQHLLKEVDKAVQQGGDKHSLICGVGLGGFWAERIGFLCGIRQVIFNPNLSPEQHMQGKIDRPEEYRDIATKCVEDFREKNRDRCLVVLSRHDEVLDSQLSAELLHKYYEIVWDEQQTHKFKNLSPHLQRIKAFKTLP</sequence>
<accession>A8GD38</accession>
<feature type="chain" id="PRO_1000064295" description="UPF0227 protein Spro_1925">
    <location>
        <begin position="1"/>
        <end position="180"/>
    </location>
</feature>
<protein>
    <recommendedName>
        <fullName evidence="1">UPF0227 protein Spro_1925</fullName>
    </recommendedName>
</protein>
<gene>
    <name type="ordered locus">Spro_1925</name>
</gene>
<dbReference type="EMBL" id="CP000826">
    <property type="protein sequence ID" value="ABV41028.1"/>
    <property type="molecule type" value="Genomic_DNA"/>
</dbReference>
<dbReference type="SMR" id="A8GD38"/>
<dbReference type="STRING" id="399741.Spro_1925"/>
<dbReference type="ESTHER" id="serp5-y1925">
    <property type="family name" value="abh_upf00227"/>
</dbReference>
<dbReference type="KEGG" id="spe:Spro_1925"/>
<dbReference type="eggNOG" id="COG3150">
    <property type="taxonomic scope" value="Bacteria"/>
</dbReference>
<dbReference type="HOGENOM" id="CLU_128769_0_0_6"/>
<dbReference type="OrthoDB" id="6469735at2"/>
<dbReference type="Gene3D" id="3.40.50.1820">
    <property type="entry name" value="alpha/beta hydrolase"/>
    <property type="match status" value="1"/>
</dbReference>
<dbReference type="HAMAP" id="MF_01047">
    <property type="entry name" value="UPF0227"/>
    <property type="match status" value="1"/>
</dbReference>
<dbReference type="InterPro" id="IPR029058">
    <property type="entry name" value="AB_hydrolase_fold"/>
</dbReference>
<dbReference type="InterPro" id="IPR022987">
    <property type="entry name" value="UPF0227"/>
</dbReference>
<dbReference type="InterPro" id="IPR008886">
    <property type="entry name" value="UPF0227/Esterase_YqiA"/>
</dbReference>
<dbReference type="NCBIfam" id="NF003431">
    <property type="entry name" value="PRK04940.1"/>
    <property type="match status" value="1"/>
</dbReference>
<dbReference type="PANTHER" id="PTHR35602">
    <property type="entry name" value="ESTERASE YQIA-RELATED"/>
    <property type="match status" value="1"/>
</dbReference>
<dbReference type="PANTHER" id="PTHR35602:SF2">
    <property type="entry name" value="UPF0227 PROTEIN YCFP"/>
    <property type="match status" value="1"/>
</dbReference>
<dbReference type="Pfam" id="PF05728">
    <property type="entry name" value="UPF0227"/>
    <property type="match status" value="1"/>
</dbReference>
<dbReference type="SUPFAM" id="SSF53474">
    <property type="entry name" value="alpha/beta-Hydrolases"/>
    <property type="match status" value="1"/>
</dbReference>
<comment type="similarity">
    <text evidence="1">Belongs to the UPF0227 family.</text>
</comment>
<name>Y1925_SERP5</name>
<organism>
    <name type="scientific">Serratia proteamaculans (strain 568)</name>
    <dbReference type="NCBI Taxonomy" id="399741"/>
    <lineage>
        <taxon>Bacteria</taxon>
        <taxon>Pseudomonadati</taxon>
        <taxon>Pseudomonadota</taxon>
        <taxon>Gammaproteobacteria</taxon>
        <taxon>Enterobacterales</taxon>
        <taxon>Yersiniaceae</taxon>
        <taxon>Serratia</taxon>
    </lineage>
</organism>
<evidence type="ECO:0000255" key="1">
    <source>
        <dbReference type="HAMAP-Rule" id="MF_01047"/>
    </source>
</evidence>
<proteinExistence type="inferred from homology"/>
<reference key="1">
    <citation type="submission" date="2007-09" db="EMBL/GenBank/DDBJ databases">
        <title>Complete sequence of chromosome of Serratia proteamaculans 568.</title>
        <authorList>
            <consortium name="US DOE Joint Genome Institute"/>
            <person name="Copeland A."/>
            <person name="Lucas S."/>
            <person name="Lapidus A."/>
            <person name="Barry K."/>
            <person name="Glavina del Rio T."/>
            <person name="Dalin E."/>
            <person name="Tice H."/>
            <person name="Pitluck S."/>
            <person name="Chain P."/>
            <person name="Malfatti S."/>
            <person name="Shin M."/>
            <person name="Vergez L."/>
            <person name="Schmutz J."/>
            <person name="Larimer F."/>
            <person name="Land M."/>
            <person name="Hauser L."/>
            <person name="Kyrpides N."/>
            <person name="Kim E."/>
            <person name="Taghavi S."/>
            <person name="Newman L."/>
            <person name="Vangronsveld J."/>
            <person name="van der Lelie D."/>
            <person name="Richardson P."/>
        </authorList>
    </citation>
    <scope>NUCLEOTIDE SEQUENCE [LARGE SCALE GENOMIC DNA]</scope>
    <source>
        <strain>568</strain>
    </source>
</reference>